<feature type="chain" id="PRO_0000209197" description="Protein SlyX homolog">
    <location>
        <begin position="1"/>
        <end position="68"/>
    </location>
</feature>
<evidence type="ECO:0000255" key="1">
    <source>
        <dbReference type="HAMAP-Rule" id="MF_00715"/>
    </source>
</evidence>
<protein>
    <recommendedName>
        <fullName evidence="1">Protein SlyX homolog</fullName>
    </recommendedName>
</protein>
<comment type="similarity">
    <text evidence="1">Belongs to the SlyX family.</text>
</comment>
<reference key="1">
    <citation type="journal article" date="2002" name="Proc. Natl. Acad. Sci. U.S.A.">
        <title>The genome sequence of the facultative intracellular pathogen Brucella melitensis.</title>
        <authorList>
            <person name="DelVecchio V.G."/>
            <person name="Kapatral V."/>
            <person name="Redkar R.J."/>
            <person name="Patra G."/>
            <person name="Mujer C."/>
            <person name="Los T."/>
            <person name="Ivanova N."/>
            <person name="Anderson I."/>
            <person name="Bhattacharyya A."/>
            <person name="Lykidis A."/>
            <person name="Reznik G."/>
            <person name="Jablonski L."/>
            <person name="Larsen N."/>
            <person name="D'Souza M."/>
            <person name="Bernal A."/>
            <person name="Mazur M."/>
            <person name="Goltsman E."/>
            <person name="Selkov E."/>
            <person name="Elzer P.H."/>
            <person name="Hagius S."/>
            <person name="O'Callaghan D."/>
            <person name="Letesson J.-J."/>
            <person name="Haselkorn R."/>
            <person name="Kyrpides N.C."/>
            <person name="Overbeek R."/>
        </authorList>
    </citation>
    <scope>NUCLEOTIDE SEQUENCE [LARGE SCALE GENOMIC DNA]</scope>
    <source>
        <strain>ATCC 23456 / CCUG 17765 / NCTC 10094 / 16M</strain>
    </source>
</reference>
<name>SLYX_BRUME</name>
<organism>
    <name type="scientific">Brucella melitensis biotype 1 (strain ATCC 23456 / CCUG 17765 / NCTC 10094 / 16M)</name>
    <dbReference type="NCBI Taxonomy" id="224914"/>
    <lineage>
        <taxon>Bacteria</taxon>
        <taxon>Pseudomonadati</taxon>
        <taxon>Pseudomonadota</taxon>
        <taxon>Alphaproteobacteria</taxon>
        <taxon>Hyphomicrobiales</taxon>
        <taxon>Brucellaceae</taxon>
        <taxon>Brucella/Ochrobactrum group</taxon>
        <taxon>Brucella</taxon>
    </lineage>
</organism>
<gene>
    <name evidence="1" type="primary">slyX</name>
    <name type="ordered locus">BMEII0231</name>
</gene>
<proteinExistence type="inferred from homology"/>
<dbReference type="EMBL" id="AE008918">
    <property type="protein sequence ID" value="AAL53472.1"/>
    <property type="molecule type" value="Genomic_DNA"/>
</dbReference>
<dbReference type="PIR" id="AE3538">
    <property type="entry name" value="AE3538"/>
</dbReference>
<dbReference type="RefSeq" id="WP_004682498.1">
    <property type="nucleotide sequence ID" value="NC_003318.1"/>
</dbReference>
<dbReference type="SMR" id="Q8YDE6"/>
<dbReference type="GeneID" id="29595347"/>
<dbReference type="KEGG" id="bme:BMEII0231"/>
<dbReference type="KEGG" id="bmel:DK63_3011"/>
<dbReference type="PATRIC" id="fig|224914.52.peg.3157"/>
<dbReference type="eggNOG" id="COG2900">
    <property type="taxonomic scope" value="Bacteria"/>
</dbReference>
<dbReference type="Proteomes" id="UP000000419">
    <property type="component" value="Chromosome II"/>
</dbReference>
<dbReference type="Gene3D" id="1.20.5.300">
    <property type="match status" value="1"/>
</dbReference>
<dbReference type="HAMAP" id="MF_00715">
    <property type="entry name" value="SlyX"/>
    <property type="match status" value="1"/>
</dbReference>
<dbReference type="InterPro" id="IPR007236">
    <property type="entry name" value="SlyX"/>
</dbReference>
<dbReference type="NCBIfam" id="NF001962">
    <property type="entry name" value="PRK00736.1"/>
    <property type="match status" value="1"/>
</dbReference>
<dbReference type="PANTHER" id="PTHR36508">
    <property type="entry name" value="PROTEIN SLYX"/>
    <property type="match status" value="1"/>
</dbReference>
<dbReference type="PANTHER" id="PTHR36508:SF1">
    <property type="entry name" value="PROTEIN SLYX"/>
    <property type="match status" value="1"/>
</dbReference>
<dbReference type="Pfam" id="PF04102">
    <property type="entry name" value="SlyX"/>
    <property type="match status" value="1"/>
</dbReference>
<accession>Q8YDE6</accession>
<sequence length="68" mass="7933">MSAEERLIELEIRVAEQEKTIDELSFVLTEQWKTVDQLSKKLNALTNRFLELEEQAAPDVPVTKPPHW</sequence>